<protein>
    <recommendedName>
        <fullName>Uncharacterized protein R713</fullName>
    </recommendedName>
</protein>
<keyword id="KW-1185">Reference proteome</keyword>
<name>YR713_MIMIV</name>
<proteinExistence type="predicted"/>
<accession>Q5UQ53</accession>
<organismHost>
    <name type="scientific">Acanthamoeba polyphaga</name>
    <name type="common">Amoeba</name>
    <dbReference type="NCBI Taxonomy" id="5757"/>
</organismHost>
<sequence length="976" mass="111861">MEWLRNICSIPINFGLDKTNYIVTNIITFVFNLYGQRLLKTDSDKIIRLTECNHNHNIFHLYPLNLKECNQDIMNNTIIIENGLIDGLDLIVPWKSLFSDTITIKINNIDLNVIIKERDKYESMSLLEDTNSYLYESEKITDIDKNIVDILNEINLLLKKCFNNIDIEINLVTIHLKDALSVVVRDIKYSNQLLSCKNISVYSVSKSTDKYLDINKIELNCKLIGTKNLLIGDIFVDSRIVDALPIIYLTDGESHIDFQILIDKFNLDDICLTKLAVSINENKIIVRDFFKMEVNSAIIVSKSALLSVYHVITFDSKYKTCDFEQCICCNIIDIYSLINLTKEYSHTIKTLKNKFVSDDVKNYSLSINNLKIIIVGQDSIKIDVKKIIIGENIELLGLNVEYQNTFIVCERCIVNNSDDKNMISFHNISSNNKVLDLESEKIIYKKIIDNNNTKHTVTFCRLKSPDIIETINYVSELINTIKSKLIPNISGNARDNSVNNHEKVSDDNKESFVSINIYNSIGTLKYKSLVLDLFVDQSNICLTTKTATDTIINVSLNNIIIAKISLQTITKDFVSVNSLKIFIDPDILDQLIYFSGLLKPSNETIINNDYNQYIPPNVLEKIQEALSNTIISTSIEDLENSLQISTDGLFMNSCQNDYTNNLASPMIKILSDSVNNLRTAIINDYSNNVPNNNFKLNIDSIHIYLYDKLTIEKTKSFLFIVIKNSSFVLSHKKIIPNNPHIIIQNCNTEQSNIKTSYKLLIDGLAFIDNDSSDSNWKYLLKFKNKAINIHTILFNDTVKTYIRTSDFHANIREETLIRLFAFISNPNQFTTNNSKHTIFIEKFFMGEINGTINYLPIVFKNISFNSINLSIQDYQINIPIQSIRNVNGFDKLTKIIKTNIEKEINPKNVLQFVPNINIIEPYAMPITRIIALIGKYFKHDKNKQKLRKITRSIQNNMGVITGTISHNLQRIFDGLL</sequence>
<organism>
    <name type="scientific">Acanthamoeba polyphaga mimivirus</name>
    <name type="common">APMV</name>
    <dbReference type="NCBI Taxonomy" id="212035"/>
    <lineage>
        <taxon>Viruses</taxon>
        <taxon>Varidnaviria</taxon>
        <taxon>Bamfordvirae</taxon>
        <taxon>Nucleocytoviricota</taxon>
        <taxon>Megaviricetes</taxon>
        <taxon>Imitervirales</taxon>
        <taxon>Mimiviridae</taxon>
        <taxon>Megamimivirinae</taxon>
        <taxon>Mimivirus</taxon>
        <taxon>Mimivirus bradfordmassiliense</taxon>
    </lineage>
</organism>
<reference key="1">
    <citation type="journal article" date="2004" name="Science">
        <title>The 1.2-megabase genome sequence of Mimivirus.</title>
        <authorList>
            <person name="Raoult D."/>
            <person name="Audic S."/>
            <person name="Robert C."/>
            <person name="Abergel C."/>
            <person name="Renesto P."/>
            <person name="Ogata H."/>
            <person name="La Scola B."/>
            <person name="Susan M."/>
            <person name="Claverie J.-M."/>
        </authorList>
    </citation>
    <scope>NUCLEOTIDE SEQUENCE [LARGE SCALE GENOMIC DNA]</scope>
    <source>
        <strain>Rowbotham-Bradford</strain>
    </source>
</reference>
<gene>
    <name type="ordered locus">MIMI_R713</name>
</gene>
<feature type="chain" id="PRO_0000251127" description="Uncharacterized protein R713">
    <location>
        <begin position="1"/>
        <end position="976"/>
    </location>
</feature>
<dbReference type="EMBL" id="AY653733">
    <property type="protein sequence ID" value="AAV50973.1"/>
    <property type="molecule type" value="Genomic_DNA"/>
</dbReference>
<dbReference type="KEGG" id="vg:9925366"/>
<dbReference type="OrthoDB" id="8786at10239"/>
<dbReference type="Proteomes" id="UP000001134">
    <property type="component" value="Genome"/>
</dbReference>